<accession>P81359</accession>
<name>UN39_CLOPA</name>
<organism>
    <name type="scientific">Clostridium pasteurianum</name>
    <dbReference type="NCBI Taxonomy" id="1501"/>
    <lineage>
        <taxon>Bacteria</taxon>
        <taxon>Bacillati</taxon>
        <taxon>Bacillota</taxon>
        <taxon>Clostridia</taxon>
        <taxon>Eubacteriales</taxon>
        <taxon>Clostridiaceae</taxon>
        <taxon>Clostridium</taxon>
    </lineage>
</organism>
<protein>
    <recommendedName>
        <fullName>Unknown protein CP 39 from 2D-PAGE</fullName>
    </recommendedName>
</protein>
<comment type="miscellaneous">
    <text>On the 2D-gel the determined pI of this unknown protein is: 5.4, its MW is: 29.5 kDa.</text>
</comment>
<sequence>MIYSTEVVNMNM</sequence>
<proteinExistence type="evidence at protein level"/>
<reference key="1">
    <citation type="journal article" date="1998" name="Electrophoresis">
        <title>Two-dimensional gel electrophoresis separation and N-terminal sequence analysis of proteins from Clostridium pasteurianum W5.</title>
        <authorList>
            <person name="Flengsrud R."/>
            <person name="Skjeldal L."/>
        </authorList>
    </citation>
    <scope>PROTEIN SEQUENCE</scope>
    <source>
        <strain>ATCC 6013 / DSM 525 / NCIB 9486 / VKM B-1774 / W5</strain>
    </source>
</reference>
<keyword id="KW-0903">Direct protein sequencing</keyword>
<feature type="chain" id="PRO_0000055544" description="Unknown protein CP 39 from 2D-PAGE">
    <location>
        <begin position="1"/>
        <end position="12" status="greater than"/>
    </location>
</feature>
<feature type="non-terminal residue">
    <location>
        <position position="12"/>
    </location>
</feature>